<accession>Q27YG9</accession>
<dbReference type="EC" id="3.6.4.-"/>
<dbReference type="EC" id="2.7.7.48"/>
<dbReference type="EMBL" id="DQ321720">
    <property type="protein sequence ID" value="ABC55268.2"/>
    <property type="molecule type" value="Genomic_RNA"/>
</dbReference>
<dbReference type="SMR" id="Q27YG9"/>
<dbReference type="GO" id="GO:0016020">
    <property type="term" value="C:membrane"/>
    <property type="evidence" value="ECO:0007669"/>
    <property type="project" value="UniProtKB-SubCell"/>
</dbReference>
<dbReference type="GO" id="GO:0005524">
    <property type="term" value="F:ATP binding"/>
    <property type="evidence" value="ECO:0007669"/>
    <property type="project" value="UniProtKB-KW"/>
</dbReference>
<dbReference type="GO" id="GO:0016787">
    <property type="term" value="F:hydrolase activity"/>
    <property type="evidence" value="ECO:0007669"/>
    <property type="project" value="UniProtKB-KW"/>
</dbReference>
<dbReference type="GO" id="GO:0003723">
    <property type="term" value="F:RNA binding"/>
    <property type="evidence" value="ECO:0007669"/>
    <property type="project" value="InterPro"/>
</dbReference>
<dbReference type="GO" id="GO:0003724">
    <property type="term" value="F:RNA helicase activity"/>
    <property type="evidence" value="ECO:0007669"/>
    <property type="project" value="InterPro"/>
</dbReference>
<dbReference type="GO" id="GO:0003968">
    <property type="term" value="F:RNA-directed RNA polymerase activity"/>
    <property type="evidence" value="ECO:0007669"/>
    <property type="project" value="UniProtKB-KW"/>
</dbReference>
<dbReference type="GO" id="GO:0006351">
    <property type="term" value="P:DNA-templated transcription"/>
    <property type="evidence" value="ECO:0007669"/>
    <property type="project" value="InterPro"/>
</dbReference>
<dbReference type="GO" id="GO:0039694">
    <property type="term" value="P:viral RNA genome replication"/>
    <property type="evidence" value="ECO:0007669"/>
    <property type="project" value="InterPro"/>
</dbReference>
<dbReference type="CDD" id="cd23200">
    <property type="entry name" value="Nora-virus_RdRp"/>
    <property type="match status" value="1"/>
</dbReference>
<dbReference type="Gene3D" id="1.20.960.20">
    <property type="match status" value="1"/>
</dbReference>
<dbReference type="Gene3D" id="3.30.70.270">
    <property type="match status" value="1"/>
</dbReference>
<dbReference type="InterPro" id="IPR043502">
    <property type="entry name" value="DNA/RNA_pol_sf"/>
</dbReference>
<dbReference type="InterPro" id="IPR000605">
    <property type="entry name" value="Helicase_SF3_ssDNA/RNA_vir"/>
</dbReference>
<dbReference type="InterPro" id="IPR014759">
    <property type="entry name" value="Helicase_SF3_ssRNA_vir"/>
</dbReference>
<dbReference type="InterPro" id="IPR043128">
    <property type="entry name" value="Rev_trsase/Diguanyl_cyclase"/>
</dbReference>
<dbReference type="InterPro" id="IPR001205">
    <property type="entry name" value="RNA-dir_pol_C"/>
</dbReference>
<dbReference type="InterPro" id="IPR007094">
    <property type="entry name" value="RNA-dir_pol_PSvirus"/>
</dbReference>
<dbReference type="Pfam" id="PF00680">
    <property type="entry name" value="RdRP_1"/>
    <property type="match status" value="1"/>
</dbReference>
<dbReference type="Pfam" id="PF00910">
    <property type="entry name" value="RNA_helicase"/>
    <property type="match status" value="1"/>
</dbReference>
<dbReference type="SUPFAM" id="SSF56672">
    <property type="entry name" value="DNA/RNA polymerases"/>
    <property type="match status" value="1"/>
</dbReference>
<dbReference type="PROSITE" id="PS50507">
    <property type="entry name" value="RDRP_SSRNA_POS"/>
    <property type="match status" value="1"/>
</dbReference>
<dbReference type="PROSITE" id="PS51218">
    <property type="entry name" value="SF3_HELICASE_2"/>
    <property type="match status" value="1"/>
</dbReference>
<sequence length="2104" mass="239183">MLIEAFINSLLQNLGIMMSFRDLVASPWILLVIAIPLCAFASSASMVREMLFRHKITENILKGTGVEELFNPFGIIIKYFLYFAILYAFIKYIRNNINVITEKVNFIRRVVSNPTGTTGRRGVLGRCVEQIVEYPTFFITMVYELQQIKNKKDLISKITMISSILKLPLGIWESTVGRMLDRPAIEGTEEMLEDVLPIVAMGLTITKTQIGDVPVESFLVNLDRNQKACENIIKRMQPLMIKMGMMKDSSYDTILQVAKEVNELSEAETWMKTTLKLNPNEFLQTQGAVRVGEIREKVATLRNKLNTLQTKELRSDKVVTECQKHLASLEVLLIEVKVLENSNQTRVKPVGVTIQGEKQIGKTNLVAILSRKICEYVQEHGDISFRNATKWTTWSRQCRDEFDTGYTGQEITYVDDAFQQKDNKDHLMWFTFISNTAVGTNQADLKQKGLPYRSKLVFTTCNKSPDKSVTIEDIEALHARFPHTICLRRNKNKMPKRGAIDESYDWVDFYYGPMSKAVSAIGSNTTSTLKTMSLSEIVKIIGDDLIIQNNFYNSTIKDVGITGQEQMDGAQLERRQRMRELRDHLLRIRSGDENMPFLDETFELNSRPIQTDEKFIPLKDNLDEEVMYGGISDQLLTRFDNIIERSLEGYDVESRELGVEPLTTLNHVRSNMLSYRAWNLINSMCINKTETFSAWLGRYITECVEGVAENLVTTKVKIRINPFTGLQLIAAKRMLQENKLIDMDEIPSTSANSYETVYDQIKNFVNDELSLMETDVVDLALAKISLSQIRSNIKRSTWLDVNDWILALKHKISGKSFAKHMDLYPSSLDSFLLTLKDWEVEDRIKFNSIYKQKVLFVQSRFSLYCWSPFISRGTRFVKVTSRFRELVDKLETGILFHEIKSVTNGIRWLGGAGNNGHVGERVRVIAHTAQFPKKSYPQNGFPINEELHREWIQLVINSDYKYHSLIGEEKVNILWNLIRLQPQREVENFKVYLEDLQASPPKTGTICAKVVNDIKAEVTSSYRQFNNYYTRLTKDGMHTLLSMLSRIGVPISDYWNDLLVDKAPAITAVTVGAITSLAIITIVKTFQYAIAGEEQSKGEKRAKQKNIATTKLQKLKFTLGKEQAEGDSIEHVKEFDGDVKFETIEKLFDHIDEHPNLNIVGLNLVAPENPIAIYAAREESYDFSFSEPRPPQWKKVVTFKEDSKRIISLQLRGEDTEDNILDEIEHAIKVSHGMPYAEWIFNGWFKKESNDNILYCVELDLVTAKTQSGPVGWTRAQTKNLKDLEIQLNKGKPIDVKSVVLGAPQASTQATDTMDVLVNKHLVKVHCLSYENLNNLALNGTQVFALASDNILIVPAHAARQNKWIRFSRATQTGHYGVAKVDERRIDFTRDIAIAIILTRAEAEQKLCELGYSIQLTNISKEKFHFPLITKYLLTADQSEVEWMNCTTLHYFAKNKTVGLGRTTSFQVSEFLCGNEYISKKLVACAQGLQSSVELSRLGDCGSPIVLASGKKAGKLIGFHGYHSPNLQTWYGAMLTVEDLGIINGVEEHFDDPWAKLITQGLPVDLPIGPEVEYVGNLIRPSLPVTNDSLDHWHKSPFADQFEEQLAPGRLNPYDSYIEGDLPTNLEGRKSLILGPNSEMAKTLPELDQGILDWIVDQLVVEQVATFKAENLLTKVSDDIDEMLDYALNGNVDNTYVRGMEVNKASGLPWSLSGSPKKSDFIDVDEATGVRSFKVNANGDALKNRVILKLQQAKMGNRILSFSSSKLKDQPIKIAQAKSGRTRVFHCIPVDLILFSGALYGPYKEAYTKAGLKCYHAVGIDPKSVGWQQLATYMTKHPNYFDADYKNYDKYLHRQVFKAVRKIQRSVIQQVCPDKWDKARAVEELDAIDTYVVDYQTVYKTNRGNKSGSYTTTIDNCLANDIYGLYAWVKTTGLRSLWDYRQNVSSVAFGDDIIKSVSDEYKDKYNYCTYRDVLNATGHIMTPGSKDGEEKPFTSFENLQFLKRGFKLENGMVLAPLLQRSIEGPFVWTDIREDQITVWVNLVQEQLIEAALWGEEYYNELCQKLKCGTNRTLNGALAVLLNTSWEVTFQKFCNRYYGIKRGDL</sequence>
<protein>
    <recommendedName>
        <fullName>Replication polyprotein</fullName>
    </recommendedName>
    <domain>
        <recommendedName>
            <fullName>Membrane protein</fullName>
        </recommendedName>
    </domain>
    <domain>
        <recommendedName>
            <fullName>Helicase</fullName>
            <ecNumber>3.6.4.-</ecNumber>
        </recommendedName>
    </domain>
    <domain>
        <recommendedName>
            <fullName>Protease</fullName>
        </recommendedName>
    </domain>
    <domain>
        <recommendedName>
            <fullName>RNA-directed RNA polymerase</fullName>
            <ecNumber>2.7.7.48</ecNumber>
        </recommendedName>
    </domain>
</protein>
<organismHost>
    <name type="scientific">Drosophila melanogaster</name>
    <name type="common">Fruit fly</name>
    <dbReference type="NCBI Taxonomy" id="7227"/>
</organismHost>
<reference key="1">
    <citation type="journal article" date="2006" name="J. Gen. Virol.">
        <title>Nora virus, a persistent virus in Drosophila, defines a new picorna-like virus family.</title>
        <authorList>
            <person name="Habayeb M.S."/>
            <person name="Ekengren S.K."/>
            <person name="Hultmark D."/>
        </authorList>
    </citation>
    <scope>NUCLEOTIDE SEQUENCE [GENOMIC RNA]</scope>
</reference>
<reference key="2">
    <citation type="submission" date="2007-09" db="EMBL/GenBank/DDBJ databases">
        <authorList>
            <person name="Ekstrom J.-O."/>
            <person name="Habayeb M."/>
            <person name="Hultmark D."/>
        </authorList>
    </citation>
    <scope>SEQUENCE REVISION TO 1708-1721</scope>
</reference>
<keyword id="KW-0067">ATP-binding</keyword>
<keyword id="KW-0175">Coiled coil</keyword>
<keyword id="KW-0347">Helicase</keyword>
<keyword id="KW-0378">Hydrolase</keyword>
<keyword id="KW-0472">Membrane</keyword>
<keyword id="KW-0547">Nucleotide-binding</keyword>
<keyword id="KW-0548">Nucleotidyltransferase</keyword>
<keyword id="KW-0696">RNA-directed RNA polymerase</keyword>
<keyword id="KW-0808">Transferase</keyword>
<keyword id="KW-0812">Transmembrane</keyword>
<keyword id="KW-1133">Transmembrane helix</keyword>
<keyword id="KW-0693">Viral RNA replication</keyword>
<proteinExistence type="predicted"/>
<name>POLR_NORAV</name>
<feature type="chain" id="PRO_0000283695" description="Replication polyprotein">
    <location>
        <begin position="1"/>
        <end position="2104"/>
    </location>
</feature>
<feature type="transmembrane region" description="Helical" evidence="1">
    <location>
        <begin position="23"/>
        <end position="43"/>
    </location>
</feature>
<feature type="transmembrane region" description="Helical" evidence="1">
    <location>
        <begin position="70"/>
        <end position="90"/>
    </location>
</feature>
<feature type="domain" description="SF3 helicase" evidence="3">
    <location>
        <begin position="329"/>
        <end position="501"/>
    </location>
</feature>
<feature type="domain" description="RdRp catalytic" evidence="2">
    <location>
        <begin position="1838"/>
        <end position="1965"/>
    </location>
</feature>
<feature type="region of interest" description="Viral peptidase" evidence="1">
    <location>
        <begin position="1499"/>
        <end position="1520"/>
    </location>
</feature>
<feature type="coiled-coil region" evidence="1">
    <location>
        <begin position="289"/>
        <end position="313"/>
    </location>
</feature>
<evidence type="ECO:0000255" key="1"/>
<evidence type="ECO:0000255" key="2">
    <source>
        <dbReference type="PROSITE-ProRule" id="PRU00539"/>
    </source>
</evidence>
<evidence type="ECO:0000255" key="3">
    <source>
        <dbReference type="PROSITE-ProRule" id="PRU00551"/>
    </source>
</evidence>
<evidence type="ECO:0000305" key="4"/>
<comment type="function">
    <text evidence="4">The peptidase activity is involved in polyprotein maturation, possibly along with hosts proteases. Transmembrane protein may be surface viral glycoprotein. RNA-directed RNA polymerase replicates the viral genome (Probable).</text>
</comment>
<comment type="catalytic activity">
    <reaction evidence="2">
        <text>RNA(n) + a ribonucleoside 5'-triphosphate = RNA(n+1) + diphosphate</text>
        <dbReference type="Rhea" id="RHEA:21248"/>
        <dbReference type="Rhea" id="RHEA-COMP:14527"/>
        <dbReference type="Rhea" id="RHEA-COMP:17342"/>
        <dbReference type="ChEBI" id="CHEBI:33019"/>
        <dbReference type="ChEBI" id="CHEBI:61557"/>
        <dbReference type="ChEBI" id="CHEBI:140395"/>
        <dbReference type="EC" id="2.7.7.48"/>
    </reaction>
</comment>
<comment type="subcellular location">
    <subcellularLocation>
        <location evidence="4">Membrane</location>
        <topology evidence="4">Multi-pass membrane protein</topology>
    </subcellularLocation>
</comment>
<comment type="PTM">
    <text evidence="4">Specific enzymatic cleavages in vivo yield mature proteins.</text>
</comment>
<organism>
    <name type="scientific">Nora virus</name>
    <dbReference type="NCBI Taxonomy" id="3071212"/>
    <lineage>
        <taxon>Viruses</taxon>
        <taxon>Riboviria</taxon>
        <taxon>Orthornavirae</taxon>
        <taxon>Pisuviricota</taxon>
        <taxon>Pisoniviricetes</taxon>
        <taxon>Picornavirales</taxon>
        <taxon>Noraviridae</taxon>
        <taxon>Orthonoravirus</taxon>
        <taxon>Orthonoravirus melanogastri</taxon>
    </lineage>
</organism>
<gene>
    <name type="ORF">ORF2</name>
</gene>